<comment type="function">
    <text evidence="1">Involved in late/very late gene activation.</text>
</comment>
<comment type="similarity">
    <text evidence="2">Belongs to the baculoviridae LEF-11 family.</text>
</comment>
<gene>
    <name type="primary">LEF-11</name>
</gene>
<feature type="chain" id="PRO_0000132842" description="Late expression factor 11">
    <location>
        <begin position="1"/>
        <end position="104"/>
    </location>
</feature>
<keyword id="KW-0804">Transcription</keyword>
<keyword id="KW-0805">Transcription regulation</keyword>
<name>LEF11_NPVSE</name>
<protein>
    <recommendedName>
        <fullName>Late expression factor 11</fullName>
    </recommendedName>
</protein>
<reference key="1">
    <citation type="journal article" date="1999" name="J. Gen. Virol.">
        <title>Sequence and organization of the Spodoptera exigua multicapsid nucleopolyhedrovirus genome.</title>
        <authorList>
            <person name="Ijkel W.F.J."/>
            <person name="van Strien E.A."/>
            <person name="Heldens J.G.M."/>
            <person name="Broer R."/>
            <person name="Zuidema D."/>
            <person name="Goldbach R.W."/>
            <person name="Vlak J.M."/>
        </authorList>
    </citation>
    <scope>NUCLEOTIDE SEQUENCE [LARGE SCALE GENOMIC DNA]</scope>
</reference>
<proteinExistence type="inferred from homology"/>
<dbReference type="EMBL" id="AF169823">
    <property type="protein sequence ID" value="AAF33648.1"/>
    <property type="molecule type" value="Genomic_DNA"/>
</dbReference>
<dbReference type="RefSeq" id="NP_037879.1">
    <property type="nucleotide sequence ID" value="NC_002169.1"/>
</dbReference>
<dbReference type="SMR" id="Q9J818"/>
<dbReference type="KEGG" id="vg:2715734"/>
<dbReference type="Proteomes" id="UP000203151">
    <property type="component" value="Segment"/>
</dbReference>
<dbReference type="GO" id="GO:0006355">
    <property type="term" value="P:regulation of DNA-templated transcription"/>
    <property type="evidence" value="ECO:0007669"/>
    <property type="project" value="InterPro"/>
</dbReference>
<dbReference type="GO" id="GO:0019058">
    <property type="term" value="P:viral life cycle"/>
    <property type="evidence" value="ECO:0007669"/>
    <property type="project" value="InterPro"/>
</dbReference>
<dbReference type="InterPro" id="IPR009429">
    <property type="entry name" value="Baculo_LEF-11"/>
</dbReference>
<dbReference type="Pfam" id="PF06385">
    <property type="entry name" value="Baculo_LEF-11"/>
    <property type="match status" value="1"/>
</dbReference>
<accession>Q9J818</accession>
<organism>
    <name type="scientific">Spodoptera exigua nuclear polyhedrosis virus (strain US)</name>
    <name type="common">SeMNPV</name>
    <dbReference type="NCBI Taxonomy" id="31506"/>
    <lineage>
        <taxon>Viruses</taxon>
        <taxon>Viruses incertae sedis</taxon>
        <taxon>Naldaviricetes</taxon>
        <taxon>Lefavirales</taxon>
        <taxon>Baculoviridae</taxon>
        <taxon>Alphabaculovirus</taxon>
        <taxon>Spodoptera exigua multiple nucleopolyhedrovirus</taxon>
    </lineage>
</organism>
<organismHost>
    <name type="scientific">Lepidoptera</name>
    <name type="common">butterflies and moths</name>
    <dbReference type="NCBI Taxonomy" id="7088"/>
</organismHost>
<sequence length="104" mass="12326">MCLTRSDVYAYVRETINKRKHEVDVSNVLAHIFEFDFQEHVEYIRANIDKALITVGGEQPYCKRLSYHIKRINKIFNLITSLETEYKAAVSKYDGDKHHYERSN</sequence>
<evidence type="ECO:0000250" key="1"/>
<evidence type="ECO:0000305" key="2"/>